<proteinExistence type="inferred from homology"/>
<reference key="1">
    <citation type="journal article" date="2008" name="Foodborne Pathog. Dis.">
        <title>The complete genome sequence and analysis of the human pathogen Campylobacter lari.</title>
        <authorList>
            <person name="Miller W.G."/>
            <person name="Wang G."/>
            <person name="Binnewies T.T."/>
            <person name="Parker C.T."/>
        </authorList>
    </citation>
    <scope>NUCLEOTIDE SEQUENCE [LARGE SCALE GENOMIC DNA]</scope>
    <source>
        <strain>RM2100 / D67 / ATCC BAA-1060</strain>
    </source>
</reference>
<evidence type="ECO:0000255" key="1">
    <source>
        <dbReference type="HAMAP-Rule" id="MF_00332"/>
    </source>
</evidence>
<evidence type="ECO:0000256" key="2">
    <source>
        <dbReference type="SAM" id="MobiDB-lite"/>
    </source>
</evidence>
<feature type="chain" id="PRO_1000133137" description="Chaperone protein DnaK">
    <location>
        <begin position="1"/>
        <end position="622"/>
    </location>
</feature>
<feature type="region of interest" description="Disordered" evidence="2">
    <location>
        <begin position="515"/>
        <end position="537"/>
    </location>
</feature>
<feature type="region of interest" description="Disordered" evidence="2">
    <location>
        <begin position="575"/>
        <end position="622"/>
    </location>
</feature>
<feature type="compositionally biased region" description="Basic and acidic residues" evidence="2">
    <location>
        <begin position="515"/>
        <end position="528"/>
    </location>
</feature>
<feature type="compositionally biased region" description="Basic and acidic residues" evidence="2">
    <location>
        <begin position="575"/>
        <end position="614"/>
    </location>
</feature>
<feature type="modified residue" description="Phosphothreonine; by autocatalysis" evidence="1">
    <location>
        <position position="197"/>
    </location>
</feature>
<organism>
    <name type="scientific">Campylobacter lari (strain RM2100 / D67 / ATCC BAA-1060)</name>
    <dbReference type="NCBI Taxonomy" id="306263"/>
    <lineage>
        <taxon>Bacteria</taxon>
        <taxon>Pseudomonadati</taxon>
        <taxon>Campylobacterota</taxon>
        <taxon>Epsilonproteobacteria</taxon>
        <taxon>Campylobacterales</taxon>
        <taxon>Campylobacteraceae</taxon>
        <taxon>Campylobacter</taxon>
    </lineage>
</organism>
<accession>B9KCH0</accession>
<gene>
    <name evidence="1" type="primary">dnaK</name>
    <name type="ordered locus">Cla_0935</name>
</gene>
<dbReference type="EMBL" id="CP000932">
    <property type="protein sequence ID" value="ACM64259.1"/>
    <property type="molecule type" value="Genomic_DNA"/>
</dbReference>
<dbReference type="RefSeq" id="WP_012661642.1">
    <property type="nucleotide sequence ID" value="NC_012039.1"/>
</dbReference>
<dbReference type="SMR" id="B9KCH0"/>
<dbReference type="STRING" id="306263.Cla_0935"/>
<dbReference type="KEGG" id="cla:CLA_0935"/>
<dbReference type="eggNOG" id="COG0443">
    <property type="taxonomic scope" value="Bacteria"/>
</dbReference>
<dbReference type="HOGENOM" id="CLU_005965_2_1_7"/>
<dbReference type="Proteomes" id="UP000007727">
    <property type="component" value="Chromosome"/>
</dbReference>
<dbReference type="GO" id="GO:0005524">
    <property type="term" value="F:ATP binding"/>
    <property type="evidence" value="ECO:0007669"/>
    <property type="project" value="UniProtKB-UniRule"/>
</dbReference>
<dbReference type="GO" id="GO:0140662">
    <property type="term" value="F:ATP-dependent protein folding chaperone"/>
    <property type="evidence" value="ECO:0007669"/>
    <property type="project" value="InterPro"/>
</dbReference>
<dbReference type="GO" id="GO:0051082">
    <property type="term" value="F:unfolded protein binding"/>
    <property type="evidence" value="ECO:0007669"/>
    <property type="project" value="InterPro"/>
</dbReference>
<dbReference type="CDD" id="cd10234">
    <property type="entry name" value="ASKHA_NBD_HSP70_DnaK-like"/>
    <property type="match status" value="1"/>
</dbReference>
<dbReference type="FunFam" id="2.60.34.10:FF:000014">
    <property type="entry name" value="Chaperone protein DnaK HSP70"/>
    <property type="match status" value="1"/>
</dbReference>
<dbReference type="FunFam" id="1.20.1270.10:FF:000001">
    <property type="entry name" value="Molecular chaperone DnaK"/>
    <property type="match status" value="1"/>
</dbReference>
<dbReference type="FunFam" id="3.30.420.40:FF:000004">
    <property type="entry name" value="Molecular chaperone DnaK"/>
    <property type="match status" value="1"/>
</dbReference>
<dbReference type="FunFam" id="3.90.640.10:FF:000003">
    <property type="entry name" value="Molecular chaperone DnaK"/>
    <property type="match status" value="1"/>
</dbReference>
<dbReference type="Gene3D" id="1.20.1270.10">
    <property type="match status" value="1"/>
</dbReference>
<dbReference type="Gene3D" id="3.30.420.40">
    <property type="match status" value="2"/>
</dbReference>
<dbReference type="Gene3D" id="3.90.640.10">
    <property type="entry name" value="Actin, Chain A, domain 4"/>
    <property type="match status" value="1"/>
</dbReference>
<dbReference type="Gene3D" id="2.60.34.10">
    <property type="entry name" value="Substrate Binding Domain Of DNAk, Chain A, domain 1"/>
    <property type="match status" value="1"/>
</dbReference>
<dbReference type="HAMAP" id="MF_00332">
    <property type="entry name" value="DnaK"/>
    <property type="match status" value="1"/>
</dbReference>
<dbReference type="InterPro" id="IPR043129">
    <property type="entry name" value="ATPase_NBD"/>
</dbReference>
<dbReference type="InterPro" id="IPR012725">
    <property type="entry name" value="Chaperone_DnaK"/>
</dbReference>
<dbReference type="InterPro" id="IPR018181">
    <property type="entry name" value="Heat_shock_70_CS"/>
</dbReference>
<dbReference type="InterPro" id="IPR029048">
    <property type="entry name" value="HSP70_C_sf"/>
</dbReference>
<dbReference type="InterPro" id="IPR029047">
    <property type="entry name" value="HSP70_peptide-bd_sf"/>
</dbReference>
<dbReference type="InterPro" id="IPR013126">
    <property type="entry name" value="Hsp_70_fam"/>
</dbReference>
<dbReference type="NCBIfam" id="NF001413">
    <property type="entry name" value="PRK00290.1"/>
    <property type="match status" value="1"/>
</dbReference>
<dbReference type="NCBIfam" id="NF003520">
    <property type="entry name" value="PRK05183.1"/>
    <property type="match status" value="1"/>
</dbReference>
<dbReference type="NCBIfam" id="TIGR02350">
    <property type="entry name" value="prok_dnaK"/>
    <property type="match status" value="1"/>
</dbReference>
<dbReference type="PANTHER" id="PTHR19375">
    <property type="entry name" value="HEAT SHOCK PROTEIN 70KDA"/>
    <property type="match status" value="1"/>
</dbReference>
<dbReference type="Pfam" id="PF00012">
    <property type="entry name" value="HSP70"/>
    <property type="match status" value="1"/>
</dbReference>
<dbReference type="PRINTS" id="PR00301">
    <property type="entry name" value="HEATSHOCK70"/>
</dbReference>
<dbReference type="SUPFAM" id="SSF53067">
    <property type="entry name" value="Actin-like ATPase domain"/>
    <property type="match status" value="2"/>
</dbReference>
<dbReference type="SUPFAM" id="SSF100934">
    <property type="entry name" value="Heat shock protein 70kD (HSP70), C-terminal subdomain"/>
    <property type="match status" value="1"/>
</dbReference>
<dbReference type="SUPFAM" id="SSF100920">
    <property type="entry name" value="Heat shock protein 70kD (HSP70), peptide-binding domain"/>
    <property type="match status" value="1"/>
</dbReference>
<dbReference type="PROSITE" id="PS00297">
    <property type="entry name" value="HSP70_1"/>
    <property type="match status" value="1"/>
</dbReference>
<dbReference type="PROSITE" id="PS00329">
    <property type="entry name" value="HSP70_2"/>
    <property type="match status" value="1"/>
</dbReference>
<dbReference type="PROSITE" id="PS01036">
    <property type="entry name" value="HSP70_3"/>
    <property type="match status" value="1"/>
</dbReference>
<protein>
    <recommendedName>
        <fullName evidence="1">Chaperone protein DnaK</fullName>
    </recommendedName>
    <alternativeName>
        <fullName evidence="1">HSP70</fullName>
    </alternativeName>
    <alternativeName>
        <fullName evidence="1">Heat shock 70 kDa protein</fullName>
    </alternativeName>
    <alternativeName>
        <fullName evidence="1">Heat shock protein 70</fullName>
    </alternativeName>
</protein>
<comment type="function">
    <text evidence="1">Acts as a chaperone.</text>
</comment>
<comment type="induction">
    <text evidence="1">By stress conditions e.g. heat shock.</text>
</comment>
<comment type="similarity">
    <text evidence="1">Belongs to the heat shock protein 70 family.</text>
</comment>
<sequence length="622" mass="67388">MSKVIGIDLGTTNSCVSVYERGESKVIPNKEGKNTTPSVVAFTDKGEILVGDSAKRQAVTNPEKTIYSIKRIMGLMINEDAAKEAKNRLPYHITERNGACAIEIAGKIYTPQEISAKVLMKLKEDAEAFLGEKVEDAVITVPAYFNDAQRKATKEAGTIAGLNVLRIINEPTAAALAYGLDKKESEKIVVYDLGGGTFDVTVLETGDNVVEVLATGGNAFLGGDDFDNKLIDYLASEFKDETGIDLKNDVMALQRLKEAAENAKKELSSANETNVNLPFITADASGPKHLTKTITRAKFESMIDGLVAETISKINEVVKDAGLDKSEVKEIVMVGGSTRVPLVQEEVKKAFGKDLNKSVNPDEVVAIGAAIQGAVIKGDVKDVLLLDVTPLSLGIETLGGVMTKIIEKGTTIPTKKEQTFSTAEDNQSAVTINVLQGEREFSRDNKSLGNFNLEGIPPAPRGMPQIEVTFDIDANGILTVSAKDKATGKAQEIKITGSSGLSEEEINNMVKDAELHKEEDRKRKEAVEARNSADSLVHQVEKSLSELGEKVSDEDKANIQKALDDLKETLKNANASKEEIESKMKTLSEVSHKLAENMYKKDEKPSDDKKKKDDDVIDAEVE</sequence>
<name>DNAK_CAMLR</name>
<keyword id="KW-0067">ATP-binding</keyword>
<keyword id="KW-0143">Chaperone</keyword>
<keyword id="KW-0547">Nucleotide-binding</keyword>
<keyword id="KW-0597">Phosphoprotein</keyword>
<keyword id="KW-1185">Reference proteome</keyword>
<keyword id="KW-0346">Stress response</keyword>